<keyword id="KW-0067">ATP-binding</keyword>
<keyword id="KW-0963">Cytoplasm</keyword>
<keyword id="KW-0418">Kinase</keyword>
<keyword id="KW-0464">Manganese</keyword>
<keyword id="KW-0479">Metal-binding</keyword>
<keyword id="KW-0547">Nucleotide-binding</keyword>
<keyword id="KW-0597">Phosphoprotein</keyword>
<keyword id="KW-1185">Reference proteome</keyword>
<keyword id="KW-0723">Serine/threonine-protein kinase</keyword>
<keyword id="KW-0808">Transferase</keyword>
<dbReference type="EC" id="2.7.11.1"/>
<dbReference type="EMBL" id="AF061281">
    <property type="protein sequence ID" value="AAC15972.1"/>
    <property type="molecule type" value="mRNA"/>
</dbReference>
<dbReference type="EMBL" id="AAFI02000064">
    <property type="protein sequence ID" value="EAL65279.1"/>
    <property type="molecule type" value="Genomic_DNA"/>
</dbReference>
<dbReference type="RefSeq" id="XP_638650.1">
    <property type="nucleotide sequence ID" value="XM_633558.1"/>
</dbReference>
<dbReference type="SMR" id="O61125"/>
<dbReference type="FunCoup" id="O61125">
    <property type="interactions" value="252"/>
</dbReference>
<dbReference type="STRING" id="44689.O61125"/>
<dbReference type="PaxDb" id="44689-DDB0191170"/>
<dbReference type="EnsemblProtists" id="EAL65279">
    <property type="protein sequence ID" value="EAL65279"/>
    <property type="gene ID" value="DDB_G0284181"/>
</dbReference>
<dbReference type="GeneID" id="8624480"/>
<dbReference type="KEGG" id="ddi:DDB_G0284181"/>
<dbReference type="dictyBase" id="DDB_G0284181">
    <property type="gene designation" value="krsA"/>
</dbReference>
<dbReference type="VEuPathDB" id="AmoebaDB:DDB_G0284181"/>
<dbReference type="eggNOG" id="KOG0574">
    <property type="taxonomic scope" value="Eukaryota"/>
</dbReference>
<dbReference type="HOGENOM" id="CLU_000288_63_23_1"/>
<dbReference type="InParanoid" id="O61125"/>
<dbReference type="OMA" id="CDAMKIT"/>
<dbReference type="PhylomeDB" id="O61125"/>
<dbReference type="PRO" id="PR:O61125"/>
<dbReference type="Proteomes" id="UP000002195">
    <property type="component" value="Chromosome 4"/>
</dbReference>
<dbReference type="GO" id="GO:0005938">
    <property type="term" value="C:cell cortex"/>
    <property type="evidence" value="ECO:0000315"/>
    <property type="project" value="dictyBase"/>
</dbReference>
<dbReference type="GO" id="GO:0005737">
    <property type="term" value="C:cytoplasm"/>
    <property type="evidence" value="ECO:0000314"/>
    <property type="project" value="dictyBase"/>
</dbReference>
<dbReference type="GO" id="GO:0005829">
    <property type="term" value="C:cytosol"/>
    <property type="evidence" value="ECO:0007669"/>
    <property type="project" value="UniProtKB-SubCell"/>
</dbReference>
<dbReference type="GO" id="GO:0005524">
    <property type="term" value="F:ATP binding"/>
    <property type="evidence" value="ECO:0000305"/>
    <property type="project" value="dictyBase"/>
</dbReference>
<dbReference type="GO" id="GO:0046872">
    <property type="term" value="F:metal ion binding"/>
    <property type="evidence" value="ECO:0007669"/>
    <property type="project" value="UniProtKB-KW"/>
</dbReference>
<dbReference type="GO" id="GO:0004672">
    <property type="term" value="F:protein kinase activity"/>
    <property type="evidence" value="ECO:0000314"/>
    <property type="project" value="dictyBase"/>
</dbReference>
<dbReference type="GO" id="GO:0106310">
    <property type="term" value="F:protein serine kinase activity"/>
    <property type="evidence" value="ECO:0007669"/>
    <property type="project" value="RHEA"/>
</dbReference>
<dbReference type="GO" id="GO:0004674">
    <property type="term" value="F:protein serine/threonine kinase activity"/>
    <property type="evidence" value="ECO:0000250"/>
    <property type="project" value="dictyBase"/>
</dbReference>
<dbReference type="GO" id="GO:0031152">
    <property type="term" value="P:aggregation involved in sorocarp development"/>
    <property type="evidence" value="ECO:0000315"/>
    <property type="project" value="dictyBase"/>
</dbReference>
<dbReference type="GO" id="GO:0006972">
    <property type="term" value="P:hyperosmotic response"/>
    <property type="evidence" value="ECO:0000315"/>
    <property type="project" value="dictyBase"/>
</dbReference>
<dbReference type="GO" id="GO:0035556">
    <property type="term" value="P:intracellular signal transduction"/>
    <property type="evidence" value="ECO:0000318"/>
    <property type="project" value="GO_Central"/>
</dbReference>
<dbReference type="GO" id="GO:0090090">
    <property type="term" value="P:negative regulation of canonical Wnt signaling pathway"/>
    <property type="evidence" value="ECO:0000318"/>
    <property type="project" value="GO_Central"/>
</dbReference>
<dbReference type="GO" id="GO:0043065">
    <property type="term" value="P:positive regulation of apoptotic process"/>
    <property type="evidence" value="ECO:0000318"/>
    <property type="project" value="GO_Central"/>
</dbReference>
<dbReference type="GO" id="GO:0051262">
    <property type="term" value="P:protein tetramerization"/>
    <property type="evidence" value="ECO:0007669"/>
    <property type="project" value="InterPro"/>
</dbReference>
<dbReference type="GO" id="GO:0106070">
    <property type="term" value="P:regulation of adenylate cyclase-activating G protein-coupled receptor signaling pathway"/>
    <property type="evidence" value="ECO:0000315"/>
    <property type="project" value="dictyBase"/>
</dbReference>
<dbReference type="GO" id="GO:0043408">
    <property type="term" value="P:regulation of MAPK cascade"/>
    <property type="evidence" value="ECO:0000318"/>
    <property type="project" value="GO_Central"/>
</dbReference>
<dbReference type="GO" id="GO:0007165">
    <property type="term" value="P:signal transduction"/>
    <property type="evidence" value="ECO:0000315"/>
    <property type="project" value="dictyBase"/>
</dbReference>
<dbReference type="CDD" id="cd06612">
    <property type="entry name" value="STKc_MST1_2"/>
    <property type="match status" value="1"/>
</dbReference>
<dbReference type="FunFam" id="1.10.510.10:FF:000605">
    <property type="entry name" value="serine/threonine-protein kinase 3 isoform X2"/>
    <property type="match status" value="1"/>
</dbReference>
<dbReference type="Gene3D" id="4.10.170.10">
    <property type="entry name" value="p53-like tetramerisation domain"/>
    <property type="match status" value="1"/>
</dbReference>
<dbReference type="Gene3D" id="1.10.510.10">
    <property type="entry name" value="Transferase(Phosphotransferase) domain 1"/>
    <property type="match status" value="1"/>
</dbReference>
<dbReference type="InterPro" id="IPR011009">
    <property type="entry name" value="Kinase-like_dom_sf"/>
</dbReference>
<dbReference type="InterPro" id="IPR036674">
    <property type="entry name" value="p53_tetramer_sf"/>
</dbReference>
<dbReference type="InterPro" id="IPR000719">
    <property type="entry name" value="Prot_kinase_dom"/>
</dbReference>
<dbReference type="InterPro" id="IPR017441">
    <property type="entry name" value="Protein_kinase_ATP_BS"/>
</dbReference>
<dbReference type="InterPro" id="IPR011524">
    <property type="entry name" value="SARAH_dom"/>
</dbReference>
<dbReference type="InterPro" id="IPR050629">
    <property type="entry name" value="STE20/SPS1-PAK"/>
</dbReference>
<dbReference type="PANTHER" id="PTHR48012:SF2">
    <property type="entry name" value="STERILE20-LIKE KINASE, ISOFORM B"/>
    <property type="match status" value="1"/>
</dbReference>
<dbReference type="PANTHER" id="PTHR48012">
    <property type="entry name" value="STERILE20-LIKE KINASE, ISOFORM B-RELATED"/>
    <property type="match status" value="1"/>
</dbReference>
<dbReference type="Pfam" id="PF00069">
    <property type="entry name" value="Pkinase"/>
    <property type="match status" value="1"/>
</dbReference>
<dbReference type="SMART" id="SM00220">
    <property type="entry name" value="S_TKc"/>
    <property type="match status" value="1"/>
</dbReference>
<dbReference type="SUPFAM" id="SSF56112">
    <property type="entry name" value="Protein kinase-like (PK-like)"/>
    <property type="match status" value="1"/>
</dbReference>
<dbReference type="PROSITE" id="PS00107">
    <property type="entry name" value="PROTEIN_KINASE_ATP"/>
    <property type="match status" value="1"/>
</dbReference>
<dbReference type="PROSITE" id="PS50011">
    <property type="entry name" value="PROTEIN_KINASE_DOM"/>
    <property type="match status" value="1"/>
</dbReference>
<dbReference type="PROSITE" id="PS50951">
    <property type="entry name" value="SARAH"/>
    <property type="match status" value="1"/>
</dbReference>
<gene>
    <name type="primary">krsA</name>
    <name type="synonym">krs1</name>
    <name type="ORF">DDB_G0284181</name>
</gene>
<comment type="function">
    <text evidence="5 6">Regulates both cAMP signaling during early development and the stress response. Functions as an activator of adenylylcyclase.</text>
</comment>
<comment type="catalytic activity">
    <reaction>
        <text>L-seryl-[protein] + ATP = O-phospho-L-seryl-[protein] + ADP + H(+)</text>
        <dbReference type="Rhea" id="RHEA:17989"/>
        <dbReference type="Rhea" id="RHEA-COMP:9863"/>
        <dbReference type="Rhea" id="RHEA-COMP:11604"/>
        <dbReference type="ChEBI" id="CHEBI:15378"/>
        <dbReference type="ChEBI" id="CHEBI:29999"/>
        <dbReference type="ChEBI" id="CHEBI:30616"/>
        <dbReference type="ChEBI" id="CHEBI:83421"/>
        <dbReference type="ChEBI" id="CHEBI:456216"/>
        <dbReference type="EC" id="2.7.11.1"/>
    </reaction>
</comment>
<comment type="catalytic activity">
    <reaction>
        <text>L-threonyl-[protein] + ATP = O-phospho-L-threonyl-[protein] + ADP + H(+)</text>
        <dbReference type="Rhea" id="RHEA:46608"/>
        <dbReference type="Rhea" id="RHEA-COMP:11060"/>
        <dbReference type="Rhea" id="RHEA-COMP:11605"/>
        <dbReference type="ChEBI" id="CHEBI:15378"/>
        <dbReference type="ChEBI" id="CHEBI:30013"/>
        <dbReference type="ChEBI" id="CHEBI:30616"/>
        <dbReference type="ChEBI" id="CHEBI:61977"/>
        <dbReference type="ChEBI" id="CHEBI:456216"/>
        <dbReference type="EC" id="2.7.11.1"/>
    </reaction>
</comment>
<comment type="cofactor">
    <cofactor evidence="5">
        <name>Mn(2+)</name>
        <dbReference type="ChEBI" id="CHEBI:29035"/>
    </cofactor>
</comment>
<comment type="subcellular location">
    <subcellularLocation>
        <location evidence="5">Cytoplasm</location>
        <location evidence="5">Cytosol</location>
    </subcellularLocation>
</comment>
<comment type="developmental stage">
    <text evidence="6">Expressed specifically at aggregation-stage.</text>
</comment>
<comment type="PTM">
    <text>Undergoes autophosphorylation in the catalytic domain.</text>
</comment>
<comment type="disruption phenotype">
    <text evidence="6">Cells exhibit reduced viability under hyperosmotic conditions. They produce smaller aggregates on membrane filters and do not form aggregation streams on a plastic surface under submerged starvation conditions, but are normal in sexual development. During early asexual development, the expression of cAMP related genes peaks earlier in the knockout mutants. Neither cAMP oscillation in starved cells nor an increase in the cAMP level following osmotic stress was observed in mutants lacking krsA.</text>
</comment>
<comment type="similarity">
    <text evidence="7">Belongs to the protein kinase superfamily. STE Ser/Thr protein kinase family. STE20 subfamily.</text>
</comment>
<accession>O61125</accession>
<accession>Q54PZ5</accession>
<feature type="chain" id="PRO_0000327885" description="Serine/threonine-protein kinase 4 homolog A">
    <location>
        <begin position="1"/>
        <end position="461"/>
    </location>
</feature>
<feature type="domain" description="Protein kinase" evidence="2">
    <location>
        <begin position="20"/>
        <end position="273"/>
    </location>
</feature>
<feature type="domain" description="SARAH" evidence="3">
    <location>
        <begin position="411"/>
        <end position="458"/>
    </location>
</feature>
<feature type="region of interest" description="Disordered" evidence="4">
    <location>
        <begin position="303"/>
        <end position="349"/>
    </location>
</feature>
<feature type="region of interest" description="Disordered" evidence="4">
    <location>
        <begin position="369"/>
        <end position="388"/>
    </location>
</feature>
<feature type="compositionally biased region" description="Acidic residues" evidence="4">
    <location>
        <begin position="307"/>
        <end position="322"/>
    </location>
</feature>
<feature type="active site" description="Proton acceptor" evidence="2">
    <location>
        <position position="139"/>
    </location>
</feature>
<feature type="binding site" evidence="2">
    <location>
        <begin position="26"/>
        <end position="34"/>
    </location>
    <ligand>
        <name>ATP</name>
        <dbReference type="ChEBI" id="CHEBI:30616"/>
    </ligand>
</feature>
<feature type="binding site" evidence="2">
    <location>
        <position position="49"/>
    </location>
    <ligand>
        <name>ATP</name>
        <dbReference type="ChEBI" id="CHEBI:30616"/>
    </ligand>
</feature>
<feature type="modified residue" description="Phosphothreonine; by autocatalysis" evidence="1">
    <location>
        <position position="173"/>
    </location>
</feature>
<feature type="mutagenesis site" description="Do not affect the function." evidence="6">
    <original>K</original>
    <variation>R</variation>
    <location>
        <position position="49"/>
    </location>
</feature>
<feature type="mutagenesis site" description="Stream formation negligible." evidence="6">
    <original>T</original>
    <variation>A</variation>
    <location>
        <position position="173"/>
    </location>
</feature>
<sequence>MSTLNVPKETMSRKDPEKFFTIVEKLGEGSYGSVYKAINISTGIVVAIKKVSVDNDLEDMEKEISFMKQCKSPYIVTYYASFRKENEVWIVMEHCGAGSVCDAMKITDKTLSEDQIAVVSRDVLQGLAYLHSVRKIHRDIKAGNILMNHKGESKLADFGVSGQLSDTMAKRQTVIGTPFWMAPEVIQEIGYDYKADIWSYGITCIEMAESKPPLFNVHPMRVIFMIPNPSRPPPKLTEPEKWSPEFNDFLAKCLTRKPELRPSAEELLKHPFITKAKSHSLLVPLIDEQDIIINEKGREVALGIEQRDEEEEDEDEDSEDSDDNRGTMVRAKPRSMQNSGGEDNDEEYDTGTMVITDNKNSYDTVVFNNDDEDSGTMKLKNTMPSNKKNFVPDYMNQFKKSDDDVTNVPLSDKYSSYSLEELKKMLAELEIEREKEVQKTLEKFSINRQALLAVIDEKKSK</sequence>
<protein>
    <recommendedName>
        <fullName>Serine/threonine-protein kinase 4 homolog A</fullName>
        <ecNumber>2.7.11.1</ecNumber>
    </recommendedName>
    <alternativeName>
        <fullName>Kinase responsive to stress A</fullName>
    </alternativeName>
    <alternativeName>
        <fullName>STE20-like kinase krsA</fullName>
    </alternativeName>
</protein>
<organism>
    <name type="scientific">Dictyostelium discoideum</name>
    <name type="common">Social amoeba</name>
    <dbReference type="NCBI Taxonomy" id="44689"/>
    <lineage>
        <taxon>Eukaryota</taxon>
        <taxon>Amoebozoa</taxon>
        <taxon>Evosea</taxon>
        <taxon>Eumycetozoa</taxon>
        <taxon>Dictyostelia</taxon>
        <taxon>Dictyosteliales</taxon>
        <taxon>Dictyosteliaceae</taxon>
        <taxon>Dictyostelium</taxon>
    </lineage>
</organism>
<name>STK4_DICDI</name>
<evidence type="ECO:0000250" key="1"/>
<evidence type="ECO:0000255" key="2">
    <source>
        <dbReference type="PROSITE-ProRule" id="PRU00159"/>
    </source>
</evidence>
<evidence type="ECO:0000255" key="3">
    <source>
        <dbReference type="PROSITE-ProRule" id="PRU00310"/>
    </source>
</evidence>
<evidence type="ECO:0000256" key="4">
    <source>
        <dbReference type="SAM" id="MobiDB-lite"/>
    </source>
</evidence>
<evidence type="ECO:0000269" key="5">
    <source>
    </source>
</evidence>
<evidence type="ECO:0000269" key="6">
    <source>
    </source>
</evidence>
<evidence type="ECO:0000305" key="7"/>
<reference key="1">
    <citation type="journal article" date="2006" name="Eur. J. Cell Biol.">
        <title>Characterization of the Ste20-like kinase Krs1 of Dictyostelium discoideum.</title>
        <authorList>
            <person name="Arasada R."/>
            <person name="Son H."/>
            <person name="Ramalingam N."/>
            <person name="Eichinger L."/>
            <person name="Schleicher M."/>
            <person name="Rohlfs M."/>
        </authorList>
    </citation>
    <scope>NUCLEOTIDE SEQUENCE [MRNA]</scope>
    <scope>CHARACTERIZATION</scope>
    <scope>FUNCTION</scope>
    <scope>COFACTOR</scope>
    <scope>AUTOPHOSPHORYLATION</scope>
    <scope>SUBCELLULAR LOCATION</scope>
    <source>
        <strain>AX3-1</strain>
    </source>
</reference>
<reference key="2">
    <citation type="journal article" date="2005" name="Nature">
        <title>The genome of the social amoeba Dictyostelium discoideum.</title>
        <authorList>
            <person name="Eichinger L."/>
            <person name="Pachebat J.A."/>
            <person name="Gloeckner G."/>
            <person name="Rajandream M.A."/>
            <person name="Sucgang R."/>
            <person name="Berriman M."/>
            <person name="Song J."/>
            <person name="Olsen R."/>
            <person name="Szafranski K."/>
            <person name="Xu Q."/>
            <person name="Tunggal B."/>
            <person name="Kummerfeld S."/>
            <person name="Madera M."/>
            <person name="Konfortov B.A."/>
            <person name="Rivero F."/>
            <person name="Bankier A.T."/>
            <person name="Lehmann R."/>
            <person name="Hamlin N."/>
            <person name="Davies R."/>
            <person name="Gaudet P."/>
            <person name="Fey P."/>
            <person name="Pilcher K."/>
            <person name="Chen G."/>
            <person name="Saunders D."/>
            <person name="Sodergren E.J."/>
            <person name="Davis P."/>
            <person name="Kerhornou A."/>
            <person name="Nie X."/>
            <person name="Hall N."/>
            <person name="Anjard C."/>
            <person name="Hemphill L."/>
            <person name="Bason N."/>
            <person name="Farbrother P."/>
            <person name="Desany B."/>
            <person name="Just E."/>
            <person name="Morio T."/>
            <person name="Rost R."/>
            <person name="Churcher C.M."/>
            <person name="Cooper J."/>
            <person name="Haydock S."/>
            <person name="van Driessche N."/>
            <person name="Cronin A."/>
            <person name="Goodhead I."/>
            <person name="Muzny D.M."/>
            <person name="Mourier T."/>
            <person name="Pain A."/>
            <person name="Lu M."/>
            <person name="Harper D."/>
            <person name="Lindsay R."/>
            <person name="Hauser H."/>
            <person name="James K.D."/>
            <person name="Quiles M."/>
            <person name="Madan Babu M."/>
            <person name="Saito T."/>
            <person name="Buchrieser C."/>
            <person name="Wardroper A."/>
            <person name="Felder M."/>
            <person name="Thangavelu M."/>
            <person name="Johnson D."/>
            <person name="Knights A."/>
            <person name="Loulseged H."/>
            <person name="Mungall K.L."/>
            <person name="Oliver K."/>
            <person name="Price C."/>
            <person name="Quail M.A."/>
            <person name="Urushihara H."/>
            <person name="Hernandez J."/>
            <person name="Rabbinowitsch E."/>
            <person name="Steffen D."/>
            <person name="Sanders M."/>
            <person name="Ma J."/>
            <person name="Kohara Y."/>
            <person name="Sharp S."/>
            <person name="Simmonds M.N."/>
            <person name="Spiegler S."/>
            <person name="Tivey A."/>
            <person name="Sugano S."/>
            <person name="White B."/>
            <person name="Walker D."/>
            <person name="Woodward J.R."/>
            <person name="Winckler T."/>
            <person name="Tanaka Y."/>
            <person name="Shaulsky G."/>
            <person name="Schleicher M."/>
            <person name="Weinstock G.M."/>
            <person name="Rosenthal A."/>
            <person name="Cox E.C."/>
            <person name="Chisholm R.L."/>
            <person name="Gibbs R.A."/>
            <person name="Loomis W.F."/>
            <person name="Platzer M."/>
            <person name="Kay R.R."/>
            <person name="Williams J.G."/>
            <person name="Dear P.H."/>
            <person name="Noegel A.A."/>
            <person name="Barrell B.G."/>
            <person name="Kuspa A."/>
        </authorList>
    </citation>
    <scope>NUCLEOTIDE SEQUENCE [LARGE SCALE GENOMIC DNA]</scope>
    <source>
        <strain>AX4</strain>
    </source>
</reference>
<reference key="3">
    <citation type="journal article" date="2007" name="Dev. Biol.">
        <title>A stress response kinase, KrsA, controls cAMP relay during the early development of Dictyostelium discoideum.</title>
        <authorList>
            <person name="Muramoto T."/>
            <person name="Kuwayama H."/>
            <person name="Kobayashi K."/>
            <person name="Urushihara H."/>
        </authorList>
    </citation>
    <scope>FUNCTION</scope>
    <scope>DEVELOPMENTAL STAGE</scope>
    <scope>MUTAGENESIS OF LYS-49 AND THR-173</scope>
    <scope>DISRUPTION PHENOTYPE</scope>
    <source>
        <strain>AX3-1</strain>
    </source>
</reference>
<proteinExistence type="evidence at protein level"/>